<organism>
    <name type="scientific">Bifidobacterium animalis subsp. lactis (strain AD011)</name>
    <dbReference type="NCBI Taxonomy" id="442563"/>
    <lineage>
        <taxon>Bacteria</taxon>
        <taxon>Bacillati</taxon>
        <taxon>Actinomycetota</taxon>
        <taxon>Actinomycetes</taxon>
        <taxon>Bifidobacteriales</taxon>
        <taxon>Bifidobacteriaceae</taxon>
        <taxon>Bifidobacterium</taxon>
    </lineage>
</organism>
<evidence type="ECO:0000255" key="1">
    <source>
        <dbReference type="HAMAP-Rule" id="MF_00182"/>
    </source>
</evidence>
<keyword id="KW-0648">Protein biosynthesis</keyword>
<keyword id="KW-1185">Reference proteome</keyword>
<keyword id="KW-0808">Transferase</keyword>
<sequence length="321" mass="34191">MLRVLFAGTPEVAVPSLRMLAKDTEHFEVVAVLTRPDAPTGRGRKIMPSPVKMAARELGLDVIECDPADECFLSALKATGAQCAAVVAYGKILRESVLEALPLGWYNLHFSLLPQWRGAAPVQRAIWAGDEVTGCSVFRITAGMDRGPVLGQSTVTIGAHENAGELLDRLAEDGAGLLAASLQALDEGVVNAVDQPAGSYDVAAKITTQDAHMRFDVPAFALDRQIRACTPAPGAWANLHPHGDDANETLHVSKAIPADMTADESPRNLKPGELHVTKHHVWVGTSTDPLELLVVKAAGKREMGAPEWARGAHLAEGAYLD</sequence>
<comment type="function">
    <text evidence="1">Attaches a formyl group to the free amino group of methionyl-tRNA(fMet). The formyl group appears to play a dual role in the initiator identity of N-formylmethionyl-tRNA by promoting its recognition by IF2 and preventing the misappropriation of this tRNA by the elongation apparatus.</text>
</comment>
<comment type="catalytic activity">
    <reaction evidence="1">
        <text>L-methionyl-tRNA(fMet) + (6R)-10-formyltetrahydrofolate = N-formyl-L-methionyl-tRNA(fMet) + (6S)-5,6,7,8-tetrahydrofolate + H(+)</text>
        <dbReference type="Rhea" id="RHEA:24380"/>
        <dbReference type="Rhea" id="RHEA-COMP:9952"/>
        <dbReference type="Rhea" id="RHEA-COMP:9953"/>
        <dbReference type="ChEBI" id="CHEBI:15378"/>
        <dbReference type="ChEBI" id="CHEBI:57453"/>
        <dbReference type="ChEBI" id="CHEBI:78530"/>
        <dbReference type="ChEBI" id="CHEBI:78844"/>
        <dbReference type="ChEBI" id="CHEBI:195366"/>
        <dbReference type="EC" id="2.1.2.9"/>
    </reaction>
</comment>
<comment type="similarity">
    <text evidence="1">Belongs to the Fmt family.</text>
</comment>
<dbReference type="EC" id="2.1.2.9" evidence="1"/>
<dbReference type="EMBL" id="CP001213">
    <property type="protein sequence ID" value="ACL29450.1"/>
    <property type="molecule type" value="Genomic_DNA"/>
</dbReference>
<dbReference type="RefSeq" id="WP_012619951.1">
    <property type="nucleotide sequence ID" value="NC_011835.1"/>
</dbReference>
<dbReference type="SMR" id="B8DTX1"/>
<dbReference type="STRING" id="442563.BLA_1162"/>
<dbReference type="GeneID" id="29696691"/>
<dbReference type="KEGG" id="bla:BLA_1162"/>
<dbReference type="HOGENOM" id="CLU_033347_1_0_11"/>
<dbReference type="Proteomes" id="UP000002456">
    <property type="component" value="Chromosome"/>
</dbReference>
<dbReference type="GO" id="GO:0005829">
    <property type="term" value="C:cytosol"/>
    <property type="evidence" value="ECO:0007669"/>
    <property type="project" value="TreeGrafter"/>
</dbReference>
<dbReference type="GO" id="GO:0004479">
    <property type="term" value="F:methionyl-tRNA formyltransferase activity"/>
    <property type="evidence" value="ECO:0007669"/>
    <property type="project" value="UniProtKB-UniRule"/>
</dbReference>
<dbReference type="CDD" id="cd08646">
    <property type="entry name" value="FMT_core_Met-tRNA-FMT_N"/>
    <property type="match status" value="1"/>
</dbReference>
<dbReference type="CDD" id="cd08704">
    <property type="entry name" value="Met_tRNA_FMT_C"/>
    <property type="match status" value="1"/>
</dbReference>
<dbReference type="Gene3D" id="3.40.50.12230">
    <property type="match status" value="1"/>
</dbReference>
<dbReference type="HAMAP" id="MF_00182">
    <property type="entry name" value="Formyl_trans"/>
    <property type="match status" value="1"/>
</dbReference>
<dbReference type="InterPro" id="IPR005794">
    <property type="entry name" value="Fmt"/>
</dbReference>
<dbReference type="InterPro" id="IPR005793">
    <property type="entry name" value="Formyl_trans_C"/>
</dbReference>
<dbReference type="InterPro" id="IPR002376">
    <property type="entry name" value="Formyl_transf_N"/>
</dbReference>
<dbReference type="InterPro" id="IPR036477">
    <property type="entry name" value="Formyl_transf_N_sf"/>
</dbReference>
<dbReference type="InterPro" id="IPR011034">
    <property type="entry name" value="Formyl_transferase-like_C_sf"/>
</dbReference>
<dbReference type="InterPro" id="IPR044135">
    <property type="entry name" value="Met-tRNA-FMT_C"/>
</dbReference>
<dbReference type="InterPro" id="IPR041711">
    <property type="entry name" value="Met-tRNA-FMT_N"/>
</dbReference>
<dbReference type="NCBIfam" id="TIGR00460">
    <property type="entry name" value="fmt"/>
    <property type="match status" value="1"/>
</dbReference>
<dbReference type="PANTHER" id="PTHR11138">
    <property type="entry name" value="METHIONYL-TRNA FORMYLTRANSFERASE"/>
    <property type="match status" value="1"/>
</dbReference>
<dbReference type="PANTHER" id="PTHR11138:SF5">
    <property type="entry name" value="METHIONYL-TRNA FORMYLTRANSFERASE, MITOCHONDRIAL"/>
    <property type="match status" value="1"/>
</dbReference>
<dbReference type="Pfam" id="PF02911">
    <property type="entry name" value="Formyl_trans_C"/>
    <property type="match status" value="1"/>
</dbReference>
<dbReference type="Pfam" id="PF00551">
    <property type="entry name" value="Formyl_trans_N"/>
    <property type="match status" value="1"/>
</dbReference>
<dbReference type="SUPFAM" id="SSF50486">
    <property type="entry name" value="FMT C-terminal domain-like"/>
    <property type="match status" value="1"/>
</dbReference>
<dbReference type="SUPFAM" id="SSF53328">
    <property type="entry name" value="Formyltransferase"/>
    <property type="match status" value="1"/>
</dbReference>
<reference key="1">
    <citation type="journal article" date="2009" name="J. Bacteriol.">
        <title>Genome sequence of the probiotic bacterium Bifidobacterium animalis subsp. lactis AD011.</title>
        <authorList>
            <person name="Kim J.F."/>
            <person name="Jeong H."/>
            <person name="Yu D.S."/>
            <person name="Choi S.-H."/>
            <person name="Hur C.-G."/>
            <person name="Park M.-S."/>
            <person name="Yoon S.H."/>
            <person name="Kim D.-W."/>
            <person name="Ji G.E."/>
            <person name="Park H.-S."/>
            <person name="Oh T.K."/>
        </authorList>
    </citation>
    <scope>NUCLEOTIDE SEQUENCE [LARGE SCALE GENOMIC DNA]</scope>
    <source>
        <strain>AD011</strain>
    </source>
</reference>
<proteinExistence type="inferred from homology"/>
<name>FMT_BIFA0</name>
<gene>
    <name evidence="1" type="primary">fmt</name>
    <name type="ordered locus">BLA_1162</name>
</gene>
<accession>B8DTX1</accession>
<feature type="chain" id="PRO_1000190007" description="Methionyl-tRNA formyltransferase">
    <location>
        <begin position="1"/>
        <end position="321"/>
    </location>
</feature>
<feature type="binding site" evidence="1">
    <location>
        <begin position="111"/>
        <end position="114"/>
    </location>
    <ligand>
        <name>(6S)-5,6,7,8-tetrahydrofolate</name>
        <dbReference type="ChEBI" id="CHEBI:57453"/>
    </ligand>
</feature>
<protein>
    <recommendedName>
        <fullName evidence="1">Methionyl-tRNA formyltransferase</fullName>
        <ecNumber evidence="1">2.1.2.9</ecNumber>
    </recommendedName>
</protein>